<proteinExistence type="inferred from homology"/>
<keyword id="KW-0687">Ribonucleoprotein</keyword>
<keyword id="KW-0689">Ribosomal protein</keyword>
<keyword id="KW-0694">RNA-binding</keyword>
<keyword id="KW-0699">rRNA-binding</keyword>
<organism>
    <name type="scientific">Pseudomonas aeruginosa (strain LESB58)</name>
    <dbReference type="NCBI Taxonomy" id="557722"/>
    <lineage>
        <taxon>Bacteria</taxon>
        <taxon>Pseudomonadati</taxon>
        <taxon>Pseudomonadota</taxon>
        <taxon>Gammaproteobacteria</taxon>
        <taxon>Pseudomonadales</taxon>
        <taxon>Pseudomonadaceae</taxon>
        <taxon>Pseudomonas</taxon>
    </lineage>
</organism>
<feature type="chain" id="PRO_1000141599" description="Large ribosomal subunit protein uL2">
    <location>
        <begin position="1"/>
        <end position="273"/>
    </location>
</feature>
<feature type="region of interest" description="Disordered" evidence="2">
    <location>
        <begin position="34"/>
        <end position="54"/>
    </location>
</feature>
<feature type="region of interest" description="Disordered" evidence="2">
    <location>
        <begin position="223"/>
        <end position="273"/>
    </location>
</feature>
<gene>
    <name evidence="1" type="primary">rplB</name>
    <name type="ordered locus">PLES_06681</name>
</gene>
<reference key="1">
    <citation type="journal article" date="2009" name="Genome Res.">
        <title>Newly introduced genomic prophage islands are critical determinants of in vivo competitiveness in the Liverpool epidemic strain of Pseudomonas aeruginosa.</title>
        <authorList>
            <person name="Winstanley C."/>
            <person name="Langille M.G.I."/>
            <person name="Fothergill J.L."/>
            <person name="Kukavica-Ibrulj I."/>
            <person name="Paradis-Bleau C."/>
            <person name="Sanschagrin F."/>
            <person name="Thomson N.R."/>
            <person name="Winsor G.L."/>
            <person name="Quail M.A."/>
            <person name="Lennard N."/>
            <person name="Bignell A."/>
            <person name="Clarke L."/>
            <person name="Seeger K."/>
            <person name="Saunders D."/>
            <person name="Harris D."/>
            <person name="Parkhill J."/>
            <person name="Hancock R.E.W."/>
            <person name="Brinkman F.S.L."/>
            <person name="Levesque R.C."/>
        </authorList>
    </citation>
    <scope>NUCLEOTIDE SEQUENCE [LARGE SCALE GENOMIC DNA]</scope>
    <source>
        <strain>LESB58</strain>
    </source>
</reference>
<name>RL2_PSEA8</name>
<accession>B7V647</accession>
<dbReference type="EMBL" id="FM209186">
    <property type="protein sequence ID" value="CAW25395.1"/>
    <property type="molecule type" value="Genomic_DNA"/>
</dbReference>
<dbReference type="RefSeq" id="WP_003103878.1">
    <property type="nucleotide sequence ID" value="NC_011770.1"/>
</dbReference>
<dbReference type="SMR" id="B7V647"/>
<dbReference type="GeneID" id="77219201"/>
<dbReference type="KEGG" id="pag:PLES_06681"/>
<dbReference type="HOGENOM" id="CLU_036235_2_1_6"/>
<dbReference type="GO" id="GO:0015934">
    <property type="term" value="C:large ribosomal subunit"/>
    <property type="evidence" value="ECO:0007669"/>
    <property type="project" value="InterPro"/>
</dbReference>
<dbReference type="GO" id="GO:0019843">
    <property type="term" value="F:rRNA binding"/>
    <property type="evidence" value="ECO:0007669"/>
    <property type="project" value="UniProtKB-UniRule"/>
</dbReference>
<dbReference type="GO" id="GO:0003735">
    <property type="term" value="F:structural constituent of ribosome"/>
    <property type="evidence" value="ECO:0007669"/>
    <property type="project" value="InterPro"/>
</dbReference>
<dbReference type="GO" id="GO:0016740">
    <property type="term" value="F:transferase activity"/>
    <property type="evidence" value="ECO:0007669"/>
    <property type="project" value="InterPro"/>
</dbReference>
<dbReference type="GO" id="GO:0002181">
    <property type="term" value="P:cytoplasmic translation"/>
    <property type="evidence" value="ECO:0007669"/>
    <property type="project" value="TreeGrafter"/>
</dbReference>
<dbReference type="FunFam" id="2.30.30.30:FF:000001">
    <property type="entry name" value="50S ribosomal protein L2"/>
    <property type="match status" value="1"/>
</dbReference>
<dbReference type="FunFam" id="2.40.50.140:FF:000003">
    <property type="entry name" value="50S ribosomal protein L2"/>
    <property type="match status" value="1"/>
</dbReference>
<dbReference type="FunFam" id="4.10.950.10:FF:000001">
    <property type="entry name" value="50S ribosomal protein L2"/>
    <property type="match status" value="1"/>
</dbReference>
<dbReference type="Gene3D" id="2.30.30.30">
    <property type="match status" value="1"/>
</dbReference>
<dbReference type="Gene3D" id="2.40.50.140">
    <property type="entry name" value="Nucleic acid-binding proteins"/>
    <property type="match status" value="1"/>
</dbReference>
<dbReference type="Gene3D" id="4.10.950.10">
    <property type="entry name" value="Ribosomal protein L2, domain 3"/>
    <property type="match status" value="1"/>
</dbReference>
<dbReference type="HAMAP" id="MF_01320_B">
    <property type="entry name" value="Ribosomal_uL2_B"/>
    <property type="match status" value="1"/>
</dbReference>
<dbReference type="InterPro" id="IPR012340">
    <property type="entry name" value="NA-bd_OB-fold"/>
</dbReference>
<dbReference type="InterPro" id="IPR014722">
    <property type="entry name" value="Rib_uL2_dom2"/>
</dbReference>
<dbReference type="InterPro" id="IPR002171">
    <property type="entry name" value="Ribosomal_uL2"/>
</dbReference>
<dbReference type="InterPro" id="IPR005880">
    <property type="entry name" value="Ribosomal_uL2_bac/org-type"/>
</dbReference>
<dbReference type="InterPro" id="IPR022669">
    <property type="entry name" value="Ribosomal_uL2_C"/>
</dbReference>
<dbReference type="InterPro" id="IPR022671">
    <property type="entry name" value="Ribosomal_uL2_CS"/>
</dbReference>
<dbReference type="InterPro" id="IPR014726">
    <property type="entry name" value="Ribosomal_uL2_dom3"/>
</dbReference>
<dbReference type="InterPro" id="IPR022666">
    <property type="entry name" value="Ribosomal_uL2_RNA-bd_dom"/>
</dbReference>
<dbReference type="InterPro" id="IPR008991">
    <property type="entry name" value="Translation_prot_SH3-like_sf"/>
</dbReference>
<dbReference type="NCBIfam" id="TIGR01171">
    <property type="entry name" value="rplB_bact"/>
    <property type="match status" value="1"/>
</dbReference>
<dbReference type="PANTHER" id="PTHR13691:SF5">
    <property type="entry name" value="LARGE RIBOSOMAL SUBUNIT PROTEIN UL2M"/>
    <property type="match status" value="1"/>
</dbReference>
<dbReference type="PANTHER" id="PTHR13691">
    <property type="entry name" value="RIBOSOMAL PROTEIN L2"/>
    <property type="match status" value="1"/>
</dbReference>
<dbReference type="Pfam" id="PF00181">
    <property type="entry name" value="Ribosomal_L2"/>
    <property type="match status" value="1"/>
</dbReference>
<dbReference type="Pfam" id="PF03947">
    <property type="entry name" value="Ribosomal_L2_C"/>
    <property type="match status" value="1"/>
</dbReference>
<dbReference type="PIRSF" id="PIRSF002158">
    <property type="entry name" value="Ribosomal_L2"/>
    <property type="match status" value="1"/>
</dbReference>
<dbReference type="SMART" id="SM01383">
    <property type="entry name" value="Ribosomal_L2"/>
    <property type="match status" value="1"/>
</dbReference>
<dbReference type="SMART" id="SM01382">
    <property type="entry name" value="Ribosomal_L2_C"/>
    <property type="match status" value="1"/>
</dbReference>
<dbReference type="SUPFAM" id="SSF50249">
    <property type="entry name" value="Nucleic acid-binding proteins"/>
    <property type="match status" value="1"/>
</dbReference>
<dbReference type="SUPFAM" id="SSF50104">
    <property type="entry name" value="Translation proteins SH3-like domain"/>
    <property type="match status" value="1"/>
</dbReference>
<dbReference type="PROSITE" id="PS00467">
    <property type="entry name" value="RIBOSOMAL_L2"/>
    <property type="match status" value="1"/>
</dbReference>
<evidence type="ECO:0000255" key="1">
    <source>
        <dbReference type="HAMAP-Rule" id="MF_01320"/>
    </source>
</evidence>
<evidence type="ECO:0000256" key="2">
    <source>
        <dbReference type="SAM" id="MobiDB-lite"/>
    </source>
</evidence>
<evidence type="ECO:0000305" key="3"/>
<comment type="function">
    <text evidence="1">One of the primary rRNA binding proteins. Required for association of the 30S and 50S subunits to form the 70S ribosome, for tRNA binding and peptide bond formation. It has been suggested to have peptidyltransferase activity; this is somewhat controversial. Makes several contacts with the 16S rRNA in the 70S ribosome.</text>
</comment>
<comment type="subunit">
    <text evidence="1">Part of the 50S ribosomal subunit. Forms a bridge to the 30S subunit in the 70S ribosome.</text>
</comment>
<comment type="similarity">
    <text evidence="1">Belongs to the universal ribosomal protein uL2 family.</text>
</comment>
<sequence>MAIVKCKPTSAGRRFVVKVVNQELHKGAPYAPLLEKKSKSGGRNNNGRITTRHIGGGHKQHYRLVDFRRNKDGIPAIVERVEYDPNRTAHIALLKYADGERRYIIAPKGVAAGDQLISGIGAPIKAGNSMPLRNIPVGSTVHGIELKPGKGAQIARSAGASAQLVAREGAYVTLRLRSGEMRKVLAECRATLGEVSNSEHSLRSLGKAGATRWRGVRPTVRGVAMNPVDHPHGGGEGRTSAGRHPVSPWGLQTKGKKTRSNKRTDNMIVRRRK</sequence>
<protein>
    <recommendedName>
        <fullName evidence="1">Large ribosomal subunit protein uL2</fullName>
    </recommendedName>
    <alternativeName>
        <fullName evidence="3">50S ribosomal protein L2</fullName>
    </alternativeName>
</protein>